<name>CYOD_BUCAP</name>
<feature type="chain" id="PRO_0000183914" description="Cytochrome bo(3) ubiquinol oxidase subunit 4">
    <location>
        <begin position="1"/>
        <end position="108"/>
    </location>
</feature>
<feature type="topological domain" description="Cytoplasmic" evidence="2">
    <location>
        <begin position="1"/>
        <end position="16"/>
    </location>
</feature>
<feature type="transmembrane region" description="Helical" evidence="2">
    <location>
        <begin position="17"/>
        <end position="37"/>
    </location>
</feature>
<feature type="topological domain" description="Extracellular" evidence="2">
    <location>
        <begin position="38"/>
        <end position="46"/>
    </location>
</feature>
<feature type="transmembrane region" description="Helical" evidence="2">
    <location>
        <begin position="47"/>
        <end position="67"/>
    </location>
</feature>
<feature type="topological domain" description="Cytoplasmic" evidence="2">
    <location>
        <begin position="68"/>
        <end position="77"/>
    </location>
</feature>
<feature type="transmembrane region" description="Helical" evidence="2">
    <location>
        <begin position="78"/>
        <end position="98"/>
    </location>
</feature>
<feature type="topological domain" description="Extracellular" evidence="2">
    <location>
        <begin position="99"/>
        <end position="108"/>
    </location>
</feature>
<dbReference type="EMBL" id="AE013218">
    <property type="protein sequence ID" value="AAM67996.1"/>
    <property type="status" value="ALT_INIT"/>
    <property type="molecule type" value="Genomic_DNA"/>
</dbReference>
<dbReference type="RefSeq" id="WP_011053963.1">
    <property type="nucleotide sequence ID" value="NC_004061.1"/>
</dbReference>
<dbReference type="SMR" id="Q8K996"/>
<dbReference type="STRING" id="198804.BUsg_453"/>
<dbReference type="GeneID" id="93003924"/>
<dbReference type="KEGG" id="bas:BUsg_453"/>
<dbReference type="eggNOG" id="COG3125">
    <property type="taxonomic scope" value="Bacteria"/>
</dbReference>
<dbReference type="HOGENOM" id="CLU_140945_1_1_6"/>
<dbReference type="Proteomes" id="UP000000416">
    <property type="component" value="Chromosome"/>
</dbReference>
<dbReference type="GO" id="GO:0009319">
    <property type="term" value="C:cytochrome o ubiquinol oxidase complex"/>
    <property type="evidence" value="ECO:0007669"/>
    <property type="project" value="TreeGrafter"/>
</dbReference>
<dbReference type="GO" id="GO:0005886">
    <property type="term" value="C:plasma membrane"/>
    <property type="evidence" value="ECO:0007669"/>
    <property type="project" value="UniProtKB-SubCell"/>
</dbReference>
<dbReference type="GO" id="GO:0009486">
    <property type="term" value="F:cytochrome bo3 ubiquinol oxidase activity"/>
    <property type="evidence" value="ECO:0007669"/>
    <property type="project" value="InterPro"/>
</dbReference>
<dbReference type="GO" id="GO:0015078">
    <property type="term" value="F:proton transmembrane transporter activity"/>
    <property type="evidence" value="ECO:0007669"/>
    <property type="project" value="TreeGrafter"/>
</dbReference>
<dbReference type="GO" id="GO:0019646">
    <property type="term" value="P:aerobic electron transport chain"/>
    <property type="evidence" value="ECO:0007669"/>
    <property type="project" value="TreeGrafter"/>
</dbReference>
<dbReference type="GO" id="GO:0015990">
    <property type="term" value="P:electron transport coupled proton transport"/>
    <property type="evidence" value="ECO:0007669"/>
    <property type="project" value="InterPro"/>
</dbReference>
<dbReference type="InterPro" id="IPR005171">
    <property type="entry name" value="Cyt_c_oxidase_su4_prok"/>
</dbReference>
<dbReference type="InterPro" id="IPR014210">
    <property type="entry name" value="Cyt_o_ubiqinol_oxidase_su4"/>
</dbReference>
<dbReference type="InterPro" id="IPR050968">
    <property type="entry name" value="Cytochrome_c_oxidase_bac_sub4"/>
</dbReference>
<dbReference type="NCBIfam" id="TIGR02847">
    <property type="entry name" value="CyoD"/>
    <property type="match status" value="1"/>
</dbReference>
<dbReference type="PANTHER" id="PTHR36835">
    <property type="entry name" value="CYTOCHROME BO(3) UBIQUINOL OXIDASE SUBUNIT 4"/>
    <property type="match status" value="1"/>
</dbReference>
<dbReference type="PANTHER" id="PTHR36835:SF1">
    <property type="entry name" value="CYTOCHROME BO(3) UBIQUINOL OXIDASE SUBUNIT 4"/>
    <property type="match status" value="1"/>
</dbReference>
<dbReference type="Pfam" id="PF03626">
    <property type="entry name" value="COX4_pro"/>
    <property type="match status" value="1"/>
</dbReference>
<reference key="1">
    <citation type="journal article" date="2002" name="Science">
        <title>50 million years of genomic stasis in endosymbiotic bacteria.</title>
        <authorList>
            <person name="Tamas I."/>
            <person name="Klasson L."/>
            <person name="Canbaeck B."/>
            <person name="Naeslund A.K."/>
            <person name="Eriksson A.-S."/>
            <person name="Wernegreen J.J."/>
            <person name="Sandstroem J.P."/>
            <person name="Moran N.A."/>
            <person name="Andersson S.G.E."/>
        </authorList>
    </citation>
    <scope>NUCLEOTIDE SEQUENCE [LARGE SCALE GENOMIC DNA]</scope>
    <source>
        <strain>Sg</strain>
    </source>
</reference>
<accession>Q8K996</accession>
<proteinExistence type="inferred from homology"/>
<evidence type="ECO:0000250" key="1"/>
<evidence type="ECO:0000255" key="2"/>
<evidence type="ECO:0000305" key="3"/>
<comment type="function">
    <text evidence="1">Cytochrome bo(3) ubiquinol terminal oxidase is the component of the aerobic respiratory chain of E.coli that predominates when cells are grown at high aeration. Has proton pump activity across the membrane in addition to electron transfer, pumping 2 protons/electron (By similarity).</text>
</comment>
<comment type="subunit">
    <text evidence="1">Heterooctamer of two A chains, two B chains, two C chains and two D chains.</text>
</comment>
<comment type="subcellular location">
    <subcellularLocation>
        <location evidence="1">Cell membrane</location>
        <topology evidence="1">Multi-pass membrane protein</topology>
    </subcellularLocation>
</comment>
<comment type="similarity">
    <text evidence="3">Belongs to the cytochrome c oxidase bacterial subunit 4 family.</text>
</comment>
<comment type="sequence caution" evidence="3">
    <conflict type="erroneous initiation">
        <sequence resource="EMBL-CDS" id="AAM67996"/>
    </conflict>
    <text>Extended N-terminus.</text>
</comment>
<sequence>MNKYKKIKNNFDKEKKSYIVGFLFSLFLTIIPFFCTLNHLFSRKINFFVILLCALSQIIIHFIYFLHLDFSKKNSWNIISLLFILIIVFIIVFGSIWIMYNLNHHVIL</sequence>
<keyword id="KW-1003">Cell membrane</keyword>
<keyword id="KW-0249">Electron transport</keyword>
<keyword id="KW-0472">Membrane</keyword>
<keyword id="KW-0560">Oxidoreductase</keyword>
<keyword id="KW-0812">Transmembrane</keyword>
<keyword id="KW-1133">Transmembrane helix</keyword>
<keyword id="KW-0813">Transport</keyword>
<organism>
    <name type="scientific">Buchnera aphidicola subsp. Schizaphis graminum (strain Sg)</name>
    <dbReference type="NCBI Taxonomy" id="198804"/>
    <lineage>
        <taxon>Bacteria</taxon>
        <taxon>Pseudomonadati</taxon>
        <taxon>Pseudomonadota</taxon>
        <taxon>Gammaproteobacteria</taxon>
        <taxon>Enterobacterales</taxon>
        <taxon>Erwiniaceae</taxon>
        <taxon>Buchnera</taxon>
    </lineage>
</organism>
<protein>
    <recommendedName>
        <fullName>Cytochrome bo(3) ubiquinol oxidase subunit 4</fullName>
    </recommendedName>
    <alternativeName>
        <fullName>Cytochrome o ubiquinol oxidase subunit 4</fullName>
        <shortName>Cytochrome o subunit 4</shortName>
    </alternativeName>
    <alternativeName>
        <fullName>Oxidase bo(3) subunit 4</fullName>
    </alternativeName>
    <alternativeName>
        <fullName>Ubiquinol oxidase polypeptide IV</fullName>
    </alternativeName>
    <alternativeName>
        <fullName>Ubiquinol oxidase subunit 4</fullName>
    </alternativeName>
</protein>
<gene>
    <name type="primary">cyoD</name>
    <name type="ordered locus">BUsg_453</name>
</gene>